<comment type="function">
    <text evidence="1">Member of the two-component regulatory system CusS/CusR involved in response to copper and silver.</text>
</comment>
<comment type="subcellular location">
    <subcellularLocation>
        <location evidence="1">Cytoplasm</location>
    </subcellularLocation>
</comment>
<comment type="PTM">
    <text evidence="1">Phosphorylated by CusS.</text>
</comment>
<feature type="chain" id="PRO_0000081065" description="Transcriptional regulatory protein CusR">
    <location>
        <begin position="1"/>
        <end position="227"/>
    </location>
</feature>
<feature type="domain" description="Response regulatory" evidence="2">
    <location>
        <begin position="2"/>
        <end position="116"/>
    </location>
</feature>
<feature type="DNA-binding region" description="OmpR/PhoB-type" evidence="3">
    <location>
        <begin position="125"/>
        <end position="223"/>
    </location>
</feature>
<feature type="modified residue" description="4-aspartylphosphate" evidence="2">
    <location>
        <position position="51"/>
    </location>
</feature>
<name>CUSR_ECOL6</name>
<dbReference type="EMBL" id="AE014075">
    <property type="protein sequence ID" value="AAN79132.1"/>
    <property type="molecule type" value="Genomic_DNA"/>
</dbReference>
<dbReference type="RefSeq" id="WP_000770953.1">
    <property type="nucleotide sequence ID" value="NZ_CP051263.1"/>
</dbReference>
<dbReference type="SMR" id="P0ACZ9"/>
<dbReference type="STRING" id="199310.c0657"/>
<dbReference type="GeneID" id="93776917"/>
<dbReference type="KEGG" id="ecc:c0657"/>
<dbReference type="eggNOG" id="COG0745">
    <property type="taxonomic scope" value="Bacteria"/>
</dbReference>
<dbReference type="HOGENOM" id="CLU_000445_30_1_6"/>
<dbReference type="BioCyc" id="ECOL199310:C0657-MONOMER"/>
<dbReference type="Proteomes" id="UP000001410">
    <property type="component" value="Chromosome"/>
</dbReference>
<dbReference type="GO" id="GO:0005829">
    <property type="term" value="C:cytosol"/>
    <property type="evidence" value="ECO:0007669"/>
    <property type="project" value="TreeGrafter"/>
</dbReference>
<dbReference type="GO" id="GO:0032993">
    <property type="term" value="C:protein-DNA complex"/>
    <property type="evidence" value="ECO:0007669"/>
    <property type="project" value="TreeGrafter"/>
</dbReference>
<dbReference type="GO" id="GO:0000156">
    <property type="term" value="F:phosphorelay response regulator activity"/>
    <property type="evidence" value="ECO:0007669"/>
    <property type="project" value="TreeGrafter"/>
</dbReference>
<dbReference type="GO" id="GO:0000976">
    <property type="term" value="F:transcription cis-regulatory region binding"/>
    <property type="evidence" value="ECO:0007669"/>
    <property type="project" value="TreeGrafter"/>
</dbReference>
<dbReference type="GO" id="GO:0006355">
    <property type="term" value="P:regulation of DNA-templated transcription"/>
    <property type="evidence" value="ECO:0007669"/>
    <property type="project" value="InterPro"/>
</dbReference>
<dbReference type="CDD" id="cd19935">
    <property type="entry name" value="REC_OmpR_CusR-like"/>
    <property type="match status" value="1"/>
</dbReference>
<dbReference type="CDD" id="cd00383">
    <property type="entry name" value="trans_reg_C"/>
    <property type="match status" value="1"/>
</dbReference>
<dbReference type="FunFam" id="3.40.50.2300:FF:000001">
    <property type="entry name" value="DNA-binding response regulator PhoB"/>
    <property type="match status" value="1"/>
</dbReference>
<dbReference type="FunFam" id="1.10.10.10:FF:000005">
    <property type="entry name" value="Two-component system response regulator"/>
    <property type="match status" value="1"/>
</dbReference>
<dbReference type="Gene3D" id="3.40.50.2300">
    <property type="match status" value="1"/>
</dbReference>
<dbReference type="Gene3D" id="6.10.250.690">
    <property type="match status" value="1"/>
</dbReference>
<dbReference type="Gene3D" id="1.10.10.10">
    <property type="entry name" value="Winged helix-like DNA-binding domain superfamily/Winged helix DNA-binding domain"/>
    <property type="match status" value="1"/>
</dbReference>
<dbReference type="InterPro" id="IPR011006">
    <property type="entry name" value="CheY-like_superfamily"/>
</dbReference>
<dbReference type="InterPro" id="IPR006291">
    <property type="entry name" value="CusR-like"/>
</dbReference>
<dbReference type="InterPro" id="IPR001867">
    <property type="entry name" value="OmpR/PhoB-type_DNA-bd"/>
</dbReference>
<dbReference type="InterPro" id="IPR016032">
    <property type="entry name" value="Sig_transdc_resp-reg_C-effctor"/>
</dbReference>
<dbReference type="InterPro" id="IPR001789">
    <property type="entry name" value="Sig_transdc_resp-reg_receiver"/>
</dbReference>
<dbReference type="InterPro" id="IPR039420">
    <property type="entry name" value="WalR-like"/>
</dbReference>
<dbReference type="InterPro" id="IPR036388">
    <property type="entry name" value="WH-like_DNA-bd_sf"/>
</dbReference>
<dbReference type="NCBIfam" id="TIGR01387">
    <property type="entry name" value="cztR_silR_copR"/>
    <property type="match status" value="1"/>
</dbReference>
<dbReference type="NCBIfam" id="NF007346">
    <property type="entry name" value="PRK09836.1"/>
    <property type="match status" value="1"/>
</dbReference>
<dbReference type="PANTHER" id="PTHR48111">
    <property type="entry name" value="REGULATOR OF RPOS"/>
    <property type="match status" value="1"/>
</dbReference>
<dbReference type="PANTHER" id="PTHR48111:SF41">
    <property type="entry name" value="TRANSCRIPTIONAL REGULATORY PROTEIN CUSR-RELATED"/>
    <property type="match status" value="1"/>
</dbReference>
<dbReference type="Pfam" id="PF00072">
    <property type="entry name" value="Response_reg"/>
    <property type="match status" value="1"/>
</dbReference>
<dbReference type="Pfam" id="PF00486">
    <property type="entry name" value="Trans_reg_C"/>
    <property type="match status" value="1"/>
</dbReference>
<dbReference type="SMART" id="SM00448">
    <property type="entry name" value="REC"/>
    <property type="match status" value="1"/>
</dbReference>
<dbReference type="SMART" id="SM00862">
    <property type="entry name" value="Trans_reg_C"/>
    <property type="match status" value="1"/>
</dbReference>
<dbReference type="SUPFAM" id="SSF46894">
    <property type="entry name" value="C-terminal effector domain of the bipartite response regulators"/>
    <property type="match status" value="1"/>
</dbReference>
<dbReference type="SUPFAM" id="SSF52172">
    <property type="entry name" value="CheY-like"/>
    <property type="match status" value="1"/>
</dbReference>
<dbReference type="PROSITE" id="PS51755">
    <property type="entry name" value="OMPR_PHOB"/>
    <property type="match status" value="1"/>
</dbReference>
<dbReference type="PROSITE" id="PS50110">
    <property type="entry name" value="RESPONSE_REGULATORY"/>
    <property type="match status" value="1"/>
</dbReference>
<protein>
    <recommendedName>
        <fullName evidence="1">Transcriptional regulatory protein CusR</fullName>
    </recommendedName>
</protein>
<proteinExistence type="inferred from homology"/>
<keyword id="KW-0010">Activator</keyword>
<keyword id="KW-0186">Copper</keyword>
<keyword id="KW-0963">Cytoplasm</keyword>
<keyword id="KW-0238">DNA-binding</keyword>
<keyword id="KW-0597">Phosphoprotein</keyword>
<keyword id="KW-1185">Reference proteome</keyword>
<keyword id="KW-0804">Transcription</keyword>
<keyword id="KW-0805">Transcription regulation</keyword>
<keyword id="KW-0902">Two-component regulatory system</keyword>
<reference key="1">
    <citation type="journal article" date="2002" name="Proc. Natl. Acad. Sci. U.S.A.">
        <title>Extensive mosaic structure revealed by the complete genome sequence of uropathogenic Escherichia coli.</title>
        <authorList>
            <person name="Welch R.A."/>
            <person name="Burland V."/>
            <person name="Plunkett G. III"/>
            <person name="Redford P."/>
            <person name="Roesch P."/>
            <person name="Rasko D."/>
            <person name="Buckles E.L."/>
            <person name="Liou S.-R."/>
            <person name="Boutin A."/>
            <person name="Hackett J."/>
            <person name="Stroud D."/>
            <person name="Mayhew G.F."/>
            <person name="Rose D.J."/>
            <person name="Zhou S."/>
            <person name="Schwartz D.C."/>
            <person name="Perna N.T."/>
            <person name="Mobley H.L.T."/>
            <person name="Donnenberg M.S."/>
            <person name="Blattner F.R."/>
        </authorList>
    </citation>
    <scope>NUCLEOTIDE SEQUENCE [LARGE SCALE GENOMIC DNA]</scope>
    <source>
        <strain>CFT073 / ATCC 700928 / UPEC</strain>
    </source>
</reference>
<organism>
    <name type="scientific">Escherichia coli O6:H1 (strain CFT073 / ATCC 700928 / UPEC)</name>
    <dbReference type="NCBI Taxonomy" id="199310"/>
    <lineage>
        <taxon>Bacteria</taxon>
        <taxon>Pseudomonadati</taxon>
        <taxon>Pseudomonadota</taxon>
        <taxon>Gammaproteobacteria</taxon>
        <taxon>Enterobacterales</taxon>
        <taxon>Enterobacteriaceae</taxon>
        <taxon>Escherichia</taxon>
    </lineage>
</organism>
<gene>
    <name type="primary">cusR</name>
    <name type="ordered locus">c0657</name>
</gene>
<sequence length="227" mass="25395">MKLLIVEDEKKTGEYLTKGLTEAGFVVDLADNGLNGYHLAMTGDYDLIILDIMLPDVNGWDIVRMLRSANKGMPILLLTALGTIEHRVKGLELGADDYLVKPFAFAELLARVRTLLRRGAAVIIESQFQVADLMVDLVSRKVTRSGTRITLTSKEFTLLEFFLRHQGEVLPRSLIASQVWDMNFDSDTNAIDVAVKRLRGKIDNDFEPKLIQTVRGVGYMLEVPDGQ</sequence>
<accession>P0ACZ9</accession>
<accession>P77380</accession>
<evidence type="ECO:0000250" key="1">
    <source>
        <dbReference type="UniProtKB" id="P0ACZ8"/>
    </source>
</evidence>
<evidence type="ECO:0000255" key="2">
    <source>
        <dbReference type="PROSITE-ProRule" id="PRU00169"/>
    </source>
</evidence>
<evidence type="ECO:0000255" key="3">
    <source>
        <dbReference type="PROSITE-ProRule" id="PRU01091"/>
    </source>
</evidence>